<feature type="chain" id="PRO_0000443288" description="Zinc finger homeobox protein 2">
    <location>
        <begin position="1"/>
        <end position="2562"/>
    </location>
</feature>
<feature type="zinc finger region" description="C2H2-type 1" evidence="1">
    <location>
        <begin position="446"/>
        <end position="469"/>
    </location>
</feature>
<feature type="zinc finger region" description="C2H2-type 2" evidence="1">
    <location>
        <begin position="501"/>
        <end position="525"/>
    </location>
</feature>
<feature type="zinc finger region" description="C2H2-type 3" evidence="1">
    <location>
        <begin position="752"/>
        <end position="776"/>
    </location>
</feature>
<feature type="zinc finger region" description="C2H2-type 4" evidence="1">
    <location>
        <begin position="815"/>
        <end position="839"/>
    </location>
</feature>
<feature type="zinc finger region" description="C2H2-type 5" evidence="1">
    <location>
        <begin position="864"/>
        <end position="888"/>
    </location>
</feature>
<feature type="zinc finger region" description="C2H2-type 6" evidence="1">
    <location>
        <begin position="1003"/>
        <end position="1026"/>
    </location>
</feature>
<feature type="zinc finger region" description="C2H2-type 7" evidence="1">
    <location>
        <begin position="1185"/>
        <end position="1211"/>
    </location>
</feature>
<feature type="zinc finger region" description="C2H2-type 8" evidence="1">
    <location>
        <begin position="1242"/>
        <end position="1266"/>
    </location>
</feature>
<feature type="zinc finger region" description="C2H2-type 9" evidence="1">
    <location>
        <begin position="1474"/>
        <end position="1497"/>
    </location>
</feature>
<feature type="DNA-binding region" description="Homeobox 1" evidence="2">
    <location>
        <begin position="1589"/>
        <end position="1648"/>
    </location>
</feature>
<feature type="zinc finger region" description="C2H2-type 10; degenerate" evidence="1">
    <location>
        <begin position="1664"/>
        <end position="1687"/>
    </location>
</feature>
<feature type="zinc finger region" description="C2H2-type 11" evidence="1">
    <location>
        <begin position="1761"/>
        <end position="1783"/>
    </location>
</feature>
<feature type="DNA-binding region" description="Homeobox 2" evidence="2">
    <location>
        <begin position="1851"/>
        <end position="1910"/>
    </location>
</feature>
<feature type="DNA-binding region" description="Homeobox 3" evidence="2">
    <location>
        <begin position="2058"/>
        <end position="2117"/>
    </location>
</feature>
<feature type="zinc finger region" description="C2H2-type 12; degenerate" evidence="1">
    <location>
        <begin position="2441"/>
        <end position="2461"/>
    </location>
</feature>
<feature type="zinc finger region" description="C2H2-type 13" evidence="1">
    <location>
        <begin position="2485"/>
        <end position="2509"/>
    </location>
</feature>
<feature type="region of interest" description="Disordered" evidence="3">
    <location>
        <begin position="1"/>
        <end position="88"/>
    </location>
</feature>
<feature type="region of interest" description="Disordered" evidence="3">
    <location>
        <begin position="337"/>
        <end position="410"/>
    </location>
</feature>
<feature type="region of interest" description="Disordered" evidence="3">
    <location>
        <begin position="530"/>
        <end position="559"/>
    </location>
</feature>
<feature type="region of interest" description="Disordered" evidence="3">
    <location>
        <begin position="603"/>
        <end position="651"/>
    </location>
</feature>
<feature type="region of interest" description="Disordered" evidence="3">
    <location>
        <begin position="669"/>
        <end position="705"/>
    </location>
</feature>
<feature type="region of interest" description="Disordered" evidence="3">
    <location>
        <begin position="923"/>
        <end position="966"/>
    </location>
</feature>
<feature type="region of interest" description="Disordered" evidence="3">
    <location>
        <begin position="1058"/>
        <end position="1126"/>
    </location>
</feature>
<feature type="region of interest" description="Disordered" evidence="3">
    <location>
        <begin position="1140"/>
        <end position="1166"/>
    </location>
</feature>
<feature type="region of interest" description="Disordered" evidence="3">
    <location>
        <begin position="1278"/>
        <end position="1313"/>
    </location>
</feature>
<feature type="region of interest" description="Disordered" evidence="3">
    <location>
        <begin position="1520"/>
        <end position="1584"/>
    </location>
</feature>
<feature type="region of interest" description="Disordered" evidence="3">
    <location>
        <begin position="1689"/>
        <end position="1760"/>
    </location>
</feature>
<feature type="region of interest" description="Disordered" evidence="3">
    <location>
        <begin position="1814"/>
        <end position="1853"/>
    </location>
</feature>
<feature type="region of interest" description="Disordered" evidence="3">
    <location>
        <begin position="1907"/>
        <end position="1934"/>
    </location>
</feature>
<feature type="region of interest" description="Disordered" evidence="3">
    <location>
        <begin position="1971"/>
        <end position="2057"/>
    </location>
</feature>
<feature type="region of interest" description="Disordered" evidence="3">
    <location>
        <begin position="2114"/>
        <end position="2136"/>
    </location>
</feature>
<feature type="region of interest" description="Disordered" evidence="3">
    <location>
        <begin position="2186"/>
        <end position="2210"/>
    </location>
</feature>
<feature type="region of interest" description="Disordered" evidence="3">
    <location>
        <begin position="2263"/>
        <end position="2313"/>
    </location>
</feature>
<feature type="region of interest" description="Disordered" evidence="3">
    <location>
        <begin position="2391"/>
        <end position="2429"/>
    </location>
</feature>
<feature type="region of interest" description="Disordered" evidence="3">
    <location>
        <begin position="2506"/>
        <end position="2525"/>
    </location>
</feature>
<feature type="region of interest" description="Disordered" evidence="3">
    <location>
        <begin position="2540"/>
        <end position="2562"/>
    </location>
</feature>
<feature type="compositionally biased region" description="Polar residues" evidence="3">
    <location>
        <begin position="1"/>
        <end position="13"/>
    </location>
</feature>
<feature type="compositionally biased region" description="Basic and acidic residues" evidence="3">
    <location>
        <begin position="56"/>
        <end position="73"/>
    </location>
</feature>
<feature type="compositionally biased region" description="Pro residues" evidence="3">
    <location>
        <begin position="609"/>
        <end position="622"/>
    </location>
</feature>
<feature type="compositionally biased region" description="Polar residues" evidence="3">
    <location>
        <begin position="690"/>
        <end position="704"/>
    </location>
</feature>
<feature type="compositionally biased region" description="Pro residues" evidence="3">
    <location>
        <begin position="1091"/>
        <end position="1101"/>
    </location>
</feature>
<feature type="compositionally biased region" description="Pro residues" evidence="3">
    <location>
        <begin position="1114"/>
        <end position="1124"/>
    </location>
</feature>
<feature type="compositionally biased region" description="Basic and acidic residues" evidence="3">
    <location>
        <begin position="1278"/>
        <end position="1305"/>
    </location>
</feature>
<feature type="compositionally biased region" description="Pro residues" evidence="3">
    <location>
        <begin position="1521"/>
        <end position="1531"/>
    </location>
</feature>
<feature type="compositionally biased region" description="Acidic residues" evidence="3">
    <location>
        <begin position="1690"/>
        <end position="1713"/>
    </location>
</feature>
<feature type="compositionally biased region" description="Basic and acidic residues" evidence="3">
    <location>
        <begin position="1743"/>
        <end position="1752"/>
    </location>
</feature>
<feature type="compositionally biased region" description="Pro residues" evidence="3">
    <location>
        <begin position="1985"/>
        <end position="1996"/>
    </location>
</feature>
<feature type="compositionally biased region" description="Low complexity" evidence="3">
    <location>
        <begin position="2008"/>
        <end position="2037"/>
    </location>
</feature>
<feature type="compositionally biased region" description="Gly residues" evidence="3">
    <location>
        <begin position="2038"/>
        <end position="2051"/>
    </location>
</feature>
<feature type="compositionally biased region" description="Pro residues" evidence="3">
    <location>
        <begin position="2188"/>
        <end position="2200"/>
    </location>
</feature>
<feature type="compositionally biased region" description="Polar residues" evidence="3">
    <location>
        <begin position="2275"/>
        <end position="2286"/>
    </location>
</feature>
<feature type="compositionally biased region" description="Basic and acidic residues" evidence="3">
    <location>
        <begin position="2295"/>
        <end position="2305"/>
    </location>
</feature>
<feature type="compositionally biased region" description="Pro residues" evidence="3">
    <location>
        <begin position="2395"/>
        <end position="2411"/>
    </location>
</feature>
<feature type="compositionally biased region" description="Low complexity" evidence="3">
    <location>
        <begin position="2553"/>
        <end position="2562"/>
    </location>
</feature>
<feature type="mutagenesis site" description="Results in hyposensitivity to noxious heat." evidence="6">
    <original>R</original>
    <variation>K</variation>
    <location>
        <position position="1907"/>
    </location>
</feature>
<feature type="sequence conflict" description="In Ref. 3; BAD90426." evidence="8" ref="3">
    <original>V</original>
    <variation>I</variation>
    <location>
        <position position="13"/>
    </location>
</feature>
<reference evidence="11" key="1">
    <citation type="journal article" date="2006" name="Mol. Cell. Neurosci.">
        <title>Novel transcription factor zfh-5 is negatively regulated by its own antisense RNA in mouse brain.</title>
        <authorList>
            <person name="Komine Y."/>
            <person name="Nakamura K."/>
            <person name="Katsuki M."/>
            <person name="Yamamori T."/>
        </authorList>
    </citation>
    <scope>NUCLEOTIDE SEQUENCE [MRNA]</scope>
    <scope>TISSUE SPECIFICITY</scope>
    <scope>DEVELOPMENTAL STAGE</scope>
    <scope>INDUCTION</scope>
    <source>
        <strain evidence="11">C57BL/6Cr</strain>
        <tissue evidence="11">Brain</tissue>
    </source>
</reference>
<reference evidence="13" key="2">
    <citation type="journal article" date="2009" name="PLoS Biol.">
        <title>Lineage-specific biology revealed by a finished genome assembly of the mouse.</title>
        <authorList>
            <person name="Church D.M."/>
            <person name="Goodstadt L."/>
            <person name="Hillier L.W."/>
            <person name="Zody M.C."/>
            <person name="Goldstein S."/>
            <person name="She X."/>
            <person name="Bult C.J."/>
            <person name="Agarwala R."/>
            <person name="Cherry J.L."/>
            <person name="DiCuccio M."/>
            <person name="Hlavina W."/>
            <person name="Kapustin Y."/>
            <person name="Meric P."/>
            <person name="Maglott D."/>
            <person name="Birtle Z."/>
            <person name="Marques A.C."/>
            <person name="Graves T."/>
            <person name="Zhou S."/>
            <person name="Teague B."/>
            <person name="Potamousis K."/>
            <person name="Churas C."/>
            <person name="Place M."/>
            <person name="Herschleb J."/>
            <person name="Runnheim R."/>
            <person name="Forrest D."/>
            <person name="Amos-Landgraf J."/>
            <person name="Schwartz D.C."/>
            <person name="Cheng Z."/>
            <person name="Lindblad-Toh K."/>
            <person name="Eichler E.E."/>
            <person name="Ponting C.P."/>
        </authorList>
    </citation>
    <scope>NUCLEOTIDE SEQUENCE [LARGE SCALE GENOMIC DNA]</scope>
    <source>
        <strain>C57BL/6J</strain>
    </source>
</reference>
<reference evidence="10" key="3">
    <citation type="submission" date="2005-02" db="EMBL/GenBank/DDBJ databases">
        <title>Prediction of the coding sequences of mouse homologues of KIAA gene. The complete nucleotide sequences of mouse KIAA-homologous cDNAs identified by screening of terminal sequences of cDNA clones randomly sampled from size-fractionated libraries.</title>
        <authorList>
            <person name="Okazaki N."/>
            <person name="Kikuno R.F."/>
            <person name="Ohara R."/>
            <person name="Inamoto S."/>
            <person name="Nagase T."/>
            <person name="Ohara O."/>
            <person name="Koga H."/>
        </authorList>
    </citation>
    <scope>NUCLEOTIDE SEQUENCE [MRNA] OF 1-222</scope>
    <source>
        <tissue evidence="10">Brain</tissue>
    </source>
</reference>
<reference evidence="9" key="4">
    <citation type="journal article" date="2004" name="Genome Res.">
        <title>The status, quality, and expansion of the NIH full-length cDNA project: the Mammalian Gene Collection (MGC).</title>
        <authorList>
            <consortium name="The MGC Project Team"/>
        </authorList>
    </citation>
    <scope>NUCLEOTIDE SEQUENCE [LARGE SCALE MRNA] OF 2155-2562</scope>
    <source>
        <strain evidence="9">FVB/N</strain>
        <tissue evidence="9">Mammary tumor</tissue>
    </source>
</reference>
<reference evidence="8" key="5">
    <citation type="journal article" date="2012" name="PLoS ONE">
        <title>Behavioral abnormalities observed in Zfhx2-deficient mice.</title>
        <authorList>
            <person name="Komine Y."/>
            <person name="Takao K."/>
            <person name="Miyakawa T."/>
            <person name="Yamamori T."/>
        </authorList>
    </citation>
    <scope>TISSUE SPECIFICITY</scope>
    <scope>DEVELOPMENTAL STAGE</scope>
    <scope>DISRUPTION PHENOTYPE</scope>
</reference>
<reference key="6">
    <citation type="journal article" date="2018" name="Brain">
        <title>A novel human pain insensitivity disorder caused by a point mutation in ZFHX2.</title>
        <authorList>
            <person name="Habib A.M."/>
            <person name="Matsuyama A."/>
            <person name="Okorokov A.L."/>
            <person name="Santana-Varela S."/>
            <person name="Bras J.T."/>
            <person name="Aloisi A.M."/>
            <person name="Emery E.C."/>
            <person name="Bogdanov Y.D."/>
            <person name="Follenfant M."/>
            <person name="Gossage S.J."/>
            <person name="Gras M."/>
            <person name="Humphrey J."/>
            <person name="Kolesnikov A."/>
            <person name="Le Cann K."/>
            <person name="Li S."/>
            <person name="Minett M.S."/>
            <person name="Pereira V."/>
            <person name="Ponsolles C."/>
            <person name="Sikandar S."/>
            <person name="Torres J.M."/>
            <person name="Yamaoka K."/>
            <person name="Zhao J."/>
            <person name="Komine Y."/>
            <person name="Yamamori T."/>
            <person name="Maniatis N."/>
            <person name="Panov K.I."/>
            <person name="Houlden H."/>
            <person name="Ramirez J.D."/>
            <person name="Bennett D.L.H."/>
            <person name="Marsili L."/>
            <person name="Bachiocco V."/>
            <person name="Wood J.N."/>
            <person name="Cox J.J."/>
        </authorList>
    </citation>
    <scope>FUNCTION</scope>
    <scope>SUBCELLULAR LOCATION</scope>
    <scope>TISSUE SPECIFICITY</scope>
    <scope>DISRUPTION PHENOTYPE</scope>
    <scope>MUTAGENESIS OF ARG-1907</scope>
</reference>
<proteinExistence type="evidence at protein level"/>
<accession>Q2MHN3</accession>
<accession>Q5DU04</accession>
<accession>Q80VJ9</accession>
<sequence length="2562" mass="273485">MATLNSASPSGTVPSPGHNVRSPPPETSSSSTSDPVTKDPPDAPSTSESIRSSEPGGERLESGSDLDPPKEIGEPQEEPGCGHIPPKDLGVAKEEEEILPLDLSSHLFFAAGGQAYLLANLPLPRGSELSLPKGFPWDEASAKEEPSLPLLTHFPSSHLTTLHIQHGFDPIQGFSSSDQMLSHDTSAPSLAACERRDGSFWSYQLVPNPTEDPKDGPLGSRREDHRAMFWICLLCRLGFGRLQTFIGHTLSHGVKLSPAHHQGLLGSPAVLQEGHDGGMALLSFLEPKFLTRPSPEVPDTSTVTVKTNGAQAEDGPPEADGQALVLPAEEVIALSPPSPPTALATWDPSPTQAKDSPVPRGEAGPDWFPEGQEEDGGLCLPLNQSSPTSKEVAVLPAPAGSPEDTSDPPPSCRLADDYTPAPAAFQGLSLSSHMSLLHSRNSCKTLKCPKCNWHYKYQQTLDVHMREKHPESNSHCSYCSAGGAHPRLARGESYNCGYKPYRCDVCNYSTTTKGNLSIHMQSDKHLANLQGFQAGPGGQASPPEASLPPTSVGDKEPKTKSSWQCKVCSYETNISRNLRIHMTSEKHMQNVLMLHQGLPLGLPPGLVGPGPPPPPGAAPTNPPELFQYFGPQALGQPQTPMPGPGLRPDKPLEAQLLLNGFHHLGAPARKFPTAAPGSLSPETHLPPSQLLGSSSDGLPTSPSPDDSPALKVFRCLVCQAFSTDSLELLLYHCSIGRSLPEAEWKEVAGDTHRCKLCCYGTQLKANFQLHLKTDKHTQKYQLAAHLREGGGAMGTPSLLALGDGASYGSISPLHLRCNICDFESNSKEKMQLHTRGSAHEENSQIYKFLLEMEGAEAGPEPGLYHCLLCAWDTPSRLALLQHLRTPAHRDAQAQRRLQLLQNGPAAEEGLSALQSILSFSHGRLQTPGKASDTPLAQPPTSEKDAQNKTEQQASEVTEDRSGPPRDSANQITVFCCPYCSFLSPECDQVRVHTLSQHAVQPKYRCPLCQEQLVGRPALHFHLSHLHNVVPECVEKLLLVATTVEMTFATKMLPGPTLNPVEDGLDHPAPGAEPTPNRDQVAESSNLAPEVSPDPPLEPPLAPVEGSREPSESPDQPPSPAPSPAPRLDAQVEELAPLPTMSEEEEGAMGEPRSAEPTPADSRHPLTYRKTTNFALDKFLDPARPYKCTVCKESFTQKNILLVHYNSVSHLHKMKKAAIDPSGPARGEAGIPPPAATASDKPFKCTVCRVSYNQSSTLEIHMRSVLHQTRSRGAKIDARAEGAERGQEEFKEGETEGEAGTEKKGPDPGGFMSGLPFLSPPPPPLDLHRFSAPLFTPPVLPPFPLVPESLLKLQQQQLLLPFYLHDLKVGPKLALASPTPMLSLPAANPPPLPAPPKAELAEQEWERPLMAEEGTEAGPSSPTHTSPNEAARTAAKALLENFGFELVIQYNEGKQAVPPPPTPPPPESLGGGDKLACGACGKLFSNMLILKTHEEHVHRRFLPFEALSRYAAQFRKSYDSLYPPPVEPPKPPDGCLESPPQLGPPFVVPEPEVGGIHTSEERSLSGGGPWPSEEEEGSRGSLPPAVPVGRRFSRTKFTEFQTQALQSFFETSAYPKDGEVERLASLLGLASRVVVVWFQNARQKARKNACEGGPVTAGGASGGASGCRRCHATFACVFELVRHLKKCYDDQPPEEEEEAERGEEEEEVEEEEAEERNLEPAAARPGGPSPEHADGEDLSQTEPTRPESKESEGKAPPSPPVYACDQCAASFPSQDLLTTHHRLHLLPSVQPSAPPPSQLLDLPLLVFGERNPVVSGTSSVTGTPLKRKHDDGSLSPTGSEAGGGGEGEPPKDKRLRTTILPEQLEILYRWYMQDSNPTRKMLDCISEEVGLKKRVVQVWFQNTRARERKGQFRSTPGGVAGPAVKPTVPPSPAPFPKFNLLLSKIEDETGKEAPKRDAPAFPYPTVTPAVGPLPFLPPGKEAAVPTPEPPPPLPPPALSEDEGPEEPSKASPESEACSPSAGDLSDSSASSLAEPESPGAGGTSGGPGGGTGVPDSMGQRRYRTQMSSLQLKIMKACYEAYRTPTMQECEVLGEEIGLPKRVIQVWFQNARAKEKKAKLQGTAPPGSGGSSEGTSAAQRTDCPYCDVKYDFYVSCRGHLFSRQHLAKLKEAVRAQLKSESKCYDLAPAPETPLAPKGPPATTPASSVPLGASPTLPRLAPVLLPGPTLAQPPLGSIASFNSGPAASSGLLGLATSVLPATTVVQTAGPGRPLPQRPVSNQTNSSTDPTPGPATEPSGDKVSGERKPVATLPNSSTDALKNLKALKATVPALLGGQFLPFPLPPAGGAAPPAVFGPQLQGAYFQQLYGMKKGLFPMNPVIPQTLIGLLPNALLQQPPQAPEPTATAPPKPPELPASGEGESSEADELLTGSTGISTVDVTHRYLCRQCKMAFDGEAPATAHQRSFCFFGRGSGASMPAPLRVPICTYHCLACEVLLSGREALASHLRSSAHRRKAAPPPGGPPITVTNSATAVPAAVAFAKEEARLPHTDPNPKTTTTSTLLAL</sequence>
<evidence type="ECO:0000255" key="1">
    <source>
        <dbReference type="PROSITE-ProRule" id="PRU00042"/>
    </source>
</evidence>
<evidence type="ECO:0000255" key="2">
    <source>
        <dbReference type="PROSITE-ProRule" id="PRU00108"/>
    </source>
</evidence>
<evidence type="ECO:0000256" key="3">
    <source>
        <dbReference type="SAM" id="MobiDB-lite"/>
    </source>
</evidence>
<evidence type="ECO:0000269" key="4">
    <source>
    </source>
</evidence>
<evidence type="ECO:0000269" key="5">
    <source>
    </source>
</evidence>
<evidence type="ECO:0000269" key="6">
    <source>
    </source>
</evidence>
<evidence type="ECO:0000303" key="7">
    <source>
    </source>
</evidence>
<evidence type="ECO:0000305" key="8"/>
<evidence type="ECO:0000312" key="9">
    <source>
        <dbReference type="EMBL" id="AAH50052.1"/>
    </source>
</evidence>
<evidence type="ECO:0000312" key="10">
    <source>
        <dbReference type="EMBL" id="BAD90426.1"/>
    </source>
</evidence>
<evidence type="ECO:0000312" key="11">
    <source>
        <dbReference type="EMBL" id="BAE78491.1"/>
    </source>
</evidence>
<evidence type="ECO:0000312" key="12">
    <source>
        <dbReference type="MGI" id="MGI:2686934"/>
    </source>
</evidence>
<evidence type="ECO:0000312" key="13">
    <source>
        <dbReference type="Proteomes" id="UP000000589"/>
    </source>
</evidence>
<name>ZFHX2_MOUSE</name>
<dbReference type="EMBL" id="AB190186">
    <property type="protein sequence ID" value="BAE78491.1"/>
    <property type="molecule type" value="mRNA"/>
</dbReference>
<dbReference type="EMBL" id="AC157212">
    <property type="status" value="NOT_ANNOTATED_CDS"/>
    <property type="molecule type" value="Genomic_DNA"/>
</dbReference>
<dbReference type="EMBL" id="AK220366">
    <property type="protein sequence ID" value="BAD90426.1"/>
    <property type="status" value="ALT_INIT"/>
    <property type="molecule type" value="mRNA"/>
</dbReference>
<dbReference type="EMBL" id="BC050052">
    <property type="protein sequence ID" value="AAH50052.1"/>
    <property type="molecule type" value="mRNA"/>
</dbReference>
<dbReference type="CCDS" id="CCDS27107.1"/>
<dbReference type="RefSeq" id="NP_001034287.1">
    <property type="nucleotide sequence ID" value="NM_001039198.1"/>
</dbReference>
<dbReference type="RefSeq" id="XP_006519044.1">
    <property type="nucleotide sequence ID" value="XM_006518981.3"/>
</dbReference>
<dbReference type="FunCoup" id="Q2MHN3">
    <property type="interactions" value="799"/>
</dbReference>
<dbReference type="STRING" id="10090.ENSMUSP00000045156"/>
<dbReference type="GlyGen" id="Q2MHN3">
    <property type="glycosylation" value="11 sites, 1 O-linked glycan (1 site)"/>
</dbReference>
<dbReference type="iPTMnet" id="Q2MHN3"/>
<dbReference type="PhosphoSitePlus" id="Q2MHN3"/>
<dbReference type="PaxDb" id="10090-ENSMUSP00000045156"/>
<dbReference type="PeptideAtlas" id="Q2MHN3"/>
<dbReference type="ProteomicsDB" id="275145"/>
<dbReference type="Antibodypedia" id="51729">
    <property type="antibodies" value="37 antibodies from 12 providers"/>
</dbReference>
<dbReference type="Ensembl" id="ENSMUST00000036328.9">
    <property type="protein sequence ID" value="ENSMUSP00000045156.9"/>
    <property type="gene ID" value="ENSMUSG00000040721.10"/>
</dbReference>
<dbReference type="GeneID" id="239102"/>
<dbReference type="KEGG" id="mmu:239102"/>
<dbReference type="UCSC" id="uc007txz.1">
    <property type="organism name" value="mouse"/>
</dbReference>
<dbReference type="AGR" id="MGI:2686934"/>
<dbReference type="CTD" id="85446"/>
<dbReference type="MGI" id="MGI:2686934">
    <property type="gene designation" value="Zfhx2"/>
</dbReference>
<dbReference type="VEuPathDB" id="HostDB:ENSMUSG00000040721"/>
<dbReference type="eggNOG" id="KOG1146">
    <property type="taxonomic scope" value="Eukaryota"/>
</dbReference>
<dbReference type="GeneTree" id="ENSGT00940000160537"/>
<dbReference type="HOGENOM" id="CLU_001401_1_0_1"/>
<dbReference type="InParanoid" id="Q2MHN3"/>
<dbReference type="OMA" id="PDTHLPQ"/>
<dbReference type="OrthoDB" id="6417226at2759"/>
<dbReference type="PhylomeDB" id="Q2MHN3"/>
<dbReference type="TreeFam" id="TF323288"/>
<dbReference type="BioGRID-ORCS" id="239102">
    <property type="hits" value="2 hits in 77 CRISPR screens"/>
</dbReference>
<dbReference type="ChiTaRS" id="Zfhx2">
    <property type="organism name" value="mouse"/>
</dbReference>
<dbReference type="PRO" id="PR:Q2MHN3"/>
<dbReference type="Proteomes" id="UP000000589">
    <property type="component" value="Chromosome 14"/>
</dbReference>
<dbReference type="RNAct" id="Q2MHN3">
    <property type="molecule type" value="protein"/>
</dbReference>
<dbReference type="Bgee" id="ENSMUSG00000040721">
    <property type="expression patterns" value="Expressed in embryonic brain and 123 other cell types or tissues"/>
</dbReference>
<dbReference type="GO" id="GO:0005634">
    <property type="term" value="C:nucleus"/>
    <property type="evidence" value="ECO:0000314"/>
    <property type="project" value="UniProtKB"/>
</dbReference>
<dbReference type="GO" id="GO:0003677">
    <property type="term" value="F:DNA binding"/>
    <property type="evidence" value="ECO:0007669"/>
    <property type="project" value="UniProtKB-KW"/>
</dbReference>
<dbReference type="GO" id="GO:0000981">
    <property type="term" value="F:DNA-binding transcription factor activity, RNA polymerase II-specific"/>
    <property type="evidence" value="ECO:0007669"/>
    <property type="project" value="InterPro"/>
</dbReference>
<dbReference type="GO" id="GO:0008270">
    <property type="term" value="F:zinc ion binding"/>
    <property type="evidence" value="ECO:0007669"/>
    <property type="project" value="UniProtKB-KW"/>
</dbReference>
<dbReference type="GO" id="GO:0030534">
    <property type="term" value="P:adult behavior"/>
    <property type="evidence" value="ECO:0000315"/>
    <property type="project" value="MGI"/>
</dbReference>
<dbReference type="GO" id="GO:0051930">
    <property type="term" value="P:regulation of sensory perception of pain"/>
    <property type="evidence" value="ECO:0000315"/>
    <property type="project" value="UniProtKB"/>
</dbReference>
<dbReference type="CDD" id="cd00086">
    <property type="entry name" value="homeodomain"/>
    <property type="match status" value="3"/>
</dbReference>
<dbReference type="FunFam" id="3.30.160.60:FF:000317">
    <property type="entry name" value="zinc finger homeobox protein 3"/>
    <property type="match status" value="1"/>
</dbReference>
<dbReference type="FunFam" id="3.30.160.60:FF:000081">
    <property type="entry name" value="Zinc finger homeobox protein 4"/>
    <property type="match status" value="1"/>
</dbReference>
<dbReference type="FunFam" id="1.10.10.60:FF:000058">
    <property type="entry name" value="zinc finger homeobox protein 4"/>
    <property type="match status" value="1"/>
</dbReference>
<dbReference type="FunFam" id="3.30.160.60:FF:000446">
    <property type="entry name" value="Zinc finger protein"/>
    <property type="match status" value="1"/>
</dbReference>
<dbReference type="Gene3D" id="3.30.160.60">
    <property type="entry name" value="Classic Zinc Finger"/>
    <property type="match status" value="2"/>
</dbReference>
<dbReference type="Gene3D" id="1.10.10.60">
    <property type="entry name" value="Homeodomain-like"/>
    <property type="match status" value="3"/>
</dbReference>
<dbReference type="InterPro" id="IPR001356">
    <property type="entry name" value="HD"/>
</dbReference>
<dbReference type="InterPro" id="IPR017970">
    <property type="entry name" value="Homeobox_CS"/>
</dbReference>
<dbReference type="InterPro" id="IPR009057">
    <property type="entry name" value="Homeodomain-like_sf"/>
</dbReference>
<dbReference type="InterPro" id="IPR003604">
    <property type="entry name" value="Matrin/U1-like-C_Znf_C2H2"/>
</dbReference>
<dbReference type="InterPro" id="IPR036236">
    <property type="entry name" value="Znf_C2H2_sf"/>
</dbReference>
<dbReference type="InterPro" id="IPR013087">
    <property type="entry name" value="Znf_C2H2_type"/>
</dbReference>
<dbReference type="InterPro" id="IPR051968">
    <property type="entry name" value="ZnFinger_Homeobox_TR"/>
</dbReference>
<dbReference type="PANTHER" id="PTHR45891">
    <property type="entry name" value="ZINC FINGER HOMEOBOX PROTEIN"/>
    <property type="match status" value="1"/>
</dbReference>
<dbReference type="PANTHER" id="PTHR45891:SF1">
    <property type="entry name" value="ZINC FINGER HOMEOBOX PROTEIN 2"/>
    <property type="match status" value="1"/>
</dbReference>
<dbReference type="Pfam" id="PF00046">
    <property type="entry name" value="Homeodomain"/>
    <property type="match status" value="3"/>
</dbReference>
<dbReference type="Pfam" id="PF24056">
    <property type="entry name" value="zf-C2H2_ZFHX3"/>
    <property type="match status" value="1"/>
</dbReference>
<dbReference type="SMART" id="SM00389">
    <property type="entry name" value="HOX"/>
    <property type="match status" value="3"/>
</dbReference>
<dbReference type="SMART" id="SM00355">
    <property type="entry name" value="ZnF_C2H2"/>
    <property type="match status" value="15"/>
</dbReference>
<dbReference type="SMART" id="SM00451">
    <property type="entry name" value="ZnF_U1"/>
    <property type="match status" value="7"/>
</dbReference>
<dbReference type="SUPFAM" id="SSF57667">
    <property type="entry name" value="beta-beta-alpha zinc fingers"/>
    <property type="match status" value="4"/>
</dbReference>
<dbReference type="SUPFAM" id="SSF46689">
    <property type="entry name" value="Homeodomain-like"/>
    <property type="match status" value="3"/>
</dbReference>
<dbReference type="PROSITE" id="PS00027">
    <property type="entry name" value="HOMEOBOX_1"/>
    <property type="match status" value="1"/>
</dbReference>
<dbReference type="PROSITE" id="PS50071">
    <property type="entry name" value="HOMEOBOX_2"/>
    <property type="match status" value="3"/>
</dbReference>
<dbReference type="PROSITE" id="PS00028">
    <property type="entry name" value="ZINC_FINGER_C2H2_1"/>
    <property type="match status" value="9"/>
</dbReference>
<dbReference type="PROSITE" id="PS50157">
    <property type="entry name" value="ZINC_FINGER_C2H2_2"/>
    <property type="match status" value="5"/>
</dbReference>
<gene>
    <name evidence="12" type="primary">Zfhx2</name>
    <name evidence="10" type="synonym">Kiaa1056</name>
    <name evidence="7" type="synonym">zfh-5</name>
</gene>
<protein>
    <recommendedName>
        <fullName>Zinc finger homeobox protein 2</fullName>
    </recommendedName>
    <alternativeName>
        <fullName evidence="7">Zinc finger homeodomain protein 5</fullName>
    </alternativeName>
</protein>
<keyword id="KW-0238">DNA-binding</keyword>
<keyword id="KW-0371">Homeobox</keyword>
<keyword id="KW-0479">Metal-binding</keyword>
<keyword id="KW-0539">Nucleus</keyword>
<keyword id="KW-1185">Reference proteome</keyword>
<keyword id="KW-0677">Repeat</keyword>
<keyword id="KW-0804">Transcription</keyword>
<keyword id="KW-0805">Transcription regulation</keyword>
<keyword id="KW-0862">Zinc</keyword>
<keyword id="KW-0863">Zinc-finger</keyword>
<organism evidence="13">
    <name type="scientific">Mus musculus</name>
    <name type="common">Mouse</name>
    <dbReference type="NCBI Taxonomy" id="10090"/>
    <lineage>
        <taxon>Eukaryota</taxon>
        <taxon>Metazoa</taxon>
        <taxon>Chordata</taxon>
        <taxon>Craniata</taxon>
        <taxon>Vertebrata</taxon>
        <taxon>Euteleostomi</taxon>
        <taxon>Mammalia</taxon>
        <taxon>Eutheria</taxon>
        <taxon>Euarchontoglires</taxon>
        <taxon>Glires</taxon>
        <taxon>Rodentia</taxon>
        <taxon>Myomorpha</taxon>
        <taxon>Muroidea</taxon>
        <taxon>Muridae</taxon>
        <taxon>Murinae</taxon>
        <taxon>Mus</taxon>
        <taxon>Mus</taxon>
    </lineage>
</organism>
<comment type="function">
    <text evidence="6">Transcriptional regulator that is critical for the regulation of pain perception and processing of noxious stimuli.</text>
</comment>
<comment type="subcellular location">
    <subcellularLocation>
        <location evidence="6">Nucleus</location>
    </subcellularLocation>
</comment>
<comment type="tissue specificity">
    <text evidence="4 5 6">Expressed in brain (at protein level) (PubMed:23300874). Expressed at the highest levels in the pyramidal cell layer of the hippocampus, the suprachiasmatic nucleus, laterodorsal thalamic nucleus, lateral geniculate nucleus, substantia nigra pars compacta, and magnocellular part of the red nucleus (at protein level) (PubMed:23300874). Highly expressed in dorsal root ganglia (PubMed:29253101). Expressed at lower levels in kidney, stomach, liver, heart and testis (PubMed:16257534, PubMed:23300874).</text>
</comment>
<comment type="developmental stage">
    <text evidence="4 5">Detected at 11.5 days post coitum (dpc) in developing brain, and continues to be expressed all the way through to postnatal day 21 (PubMed:23300874). In brain, expressed at 13.5 dpc in thalamus, hypothalamus, midbrain and pontine area (PubMed:16257534).</text>
</comment>
<comment type="induction">
    <text evidence="4">Expression in specific regions of the developing brain is negatively regulated by its antisense mRNA. In particular, down-regulated in pyramidal and granule cells in the hippocampus during early differentiation and the migration stage.</text>
</comment>
<comment type="disruption phenotype">
    <text evidence="5 6">Knockout mice exhibit a range of subtle behavioral abnormalities. Locomotor activity is generally increased, but only in familiar environments. There is a slight increase in depression-like behavior, most notably increased immobility in the tail suspension test. Assays of anxiety-like behavior give conflicting results; the open field test indicates a slight reduction in anxiety-like behavior whereas other tests show no significant behavioral changes (PubMed:23300874). Knockout mice are hyposensitive to noxious mechanical stimuli applied to the tail and hypersensitive to noxious heat (PubMed:29253101).</text>
</comment>
<comment type="sequence caution" evidence="8">
    <conflict type="erroneous initiation">
        <sequence resource="EMBL-CDS" id="BAD90426"/>
    </conflict>
    <text>Extended N-terminus.</text>
</comment>